<comment type="function">
    <text evidence="1">Allows the formation of correctly charged Asn-tRNA(Asn) or Gln-tRNA(Gln) through the transamidation of misacylated Asp-tRNA(Asn) or Glu-tRNA(Gln) in organisms which lack either or both of asparaginyl-tRNA or glutaminyl-tRNA synthetases. The reaction takes place in the presence of glutamine and ATP through an activated phospho-Asp-tRNA(Asn) or phospho-Glu-tRNA(Gln).</text>
</comment>
<comment type="catalytic activity">
    <reaction evidence="1">
        <text>L-glutamyl-tRNA(Gln) + L-glutamine + ATP + H2O = L-glutaminyl-tRNA(Gln) + L-glutamate + ADP + phosphate + H(+)</text>
        <dbReference type="Rhea" id="RHEA:17521"/>
        <dbReference type="Rhea" id="RHEA-COMP:9681"/>
        <dbReference type="Rhea" id="RHEA-COMP:9684"/>
        <dbReference type="ChEBI" id="CHEBI:15377"/>
        <dbReference type="ChEBI" id="CHEBI:15378"/>
        <dbReference type="ChEBI" id="CHEBI:29985"/>
        <dbReference type="ChEBI" id="CHEBI:30616"/>
        <dbReference type="ChEBI" id="CHEBI:43474"/>
        <dbReference type="ChEBI" id="CHEBI:58359"/>
        <dbReference type="ChEBI" id="CHEBI:78520"/>
        <dbReference type="ChEBI" id="CHEBI:78521"/>
        <dbReference type="ChEBI" id="CHEBI:456216"/>
    </reaction>
</comment>
<comment type="catalytic activity">
    <reaction evidence="1">
        <text>L-aspartyl-tRNA(Asn) + L-glutamine + ATP + H2O = L-asparaginyl-tRNA(Asn) + L-glutamate + ADP + phosphate + 2 H(+)</text>
        <dbReference type="Rhea" id="RHEA:14513"/>
        <dbReference type="Rhea" id="RHEA-COMP:9674"/>
        <dbReference type="Rhea" id="RHEA-COMP:9677"/>
        <dbReference type="ChEBI" id="CHEBI:15377"/>
        <dbReference type="ChEBI" id="CHEBI:15378"/>
        <dbReference type="ChEBI" id="CHEBI:29985"/>
        <dbReference type="ChEBI" id="CHEBI:30616"/>
        <dbReference type="ChEBI" id="CHEBI:43474"/>
        <dbReference type="ChEBI" id="CHEBI:58359"/>
        <dbReference type="ChEBI" id="CHEBI:78515"/>
        <dbReference type="ChEBI" id="CHEBI:78516"/>
        <dbReference type="ChEBI" id="CHEBI:456216"/>
    </reaction>
</comment>
<comment type="subunit">
    <text evidence="1">Heterotrimer of A, B and C subunits.</text>
</comment>
<comment type="similarity">
    <text evidence="1">Belongs to the GatB/GatE family. GatB subfamily.</text>
</comment>
<name>GATB_METBF</name>
<dbReference type="EC" id="6.3.5.-" evidence="1"/>
<dbReference type="EMBL" id="CP000099">
    <property type="protein sequence ID" value="AAZ69858.1"/>
    <property type="molecule type" value="Genomic_DNA"/>
</dbReference>
<dbReference type="SMR" id="Q46E34"/>
<dbReference type="STRING" id="269797.Mbar_A0884"/>
<dbReference type="PaxDb" id="269797-Mbar_A0884"/>
<dbReference type="KEGG" id="mba:Mbar_A0884"/>
<dbReference type="eggNOG" id="arCOG01718">
    <property type="taxonomic scope" value="Archaea"/>
</dbReference>
<dbReference type="HOGENOM" id="CLU_019240_0_0_2"/>
<dbReference type="OrthoDB" id="52755at2157"/>
<dbReference type="GO" id="GO:0050566">
    <property type="term" value="F:asparaginyl-tRNA synthase (glutamine-hydrolyzing) activity"/>
    <property type="evidence" value="ECO:0007669"/>
    <property type="project" value="RHEA"/>
</dbReference>
<dbReference type="GO" id="GO:0005524">
    <property type="term" value="F:ATP binding"/>
    <property type="evidence" value="ECO:0007669"/>
    <property type="project" value="UniProtKB-KW"/>
</dbReference>
<dbReference type="GO" id="GO:0050567">
    <property type="term" value="F:glutaminyl-tRNA synthase (glutamine-hydrolyzing) activity"/>
    <property type="evidence" value="ECO:0007669"/>
    <property type="project" value="UniProtKB-UniRule"/>
</dbReference>
<dbReference type="GO" id="GO:0070681">
    <property type="term" value="P:glutaminyl-tRNAGln biosynthesis via transamidation"/>
    <property type="evidence" value="ECO:0007669"/>
    <property type="project" value="TreeGrafter"/>
</dbReference>
<dbReference type="GO" id="GO:0006412">
    <property type="term" value="P:translation"/>
    <property type="evidence" value="ECO:0007669"/>
    <property type="project" value="UniProtKB-UniRule"/>
</dbReference>
<dbReference type="FunFam" id="1.10.10.410:FF:000001">
    <property type="entry name" value="Aspartyl/glutamyl-tRNA(Asn/Gln) amidotransferase subunit B"/>
    <property type="match status" value="1"/>
</dbReference>
<dbReference type="FunFam" id="1.10.150.380:FF:000001">
    <property type="entry name" value="Aspartyl/glutamyl-tRNA(Asn/Gln) amidotransferase subunit B"/>
    <property type="match status" value="1"/>
</dbReference>
<dbReference type="Gene3D" id="1.10.10.410">
    <property type="match status" value="1"/>
</dbReference>
<dbReference type="Gene3D" id="1.10.150.380">
    <property type="entry name" value="GatB domain, N-terminal subdomain"/>
    <property type="match status" value="1"/>
</dbReference>
<dbReference type="HAMAP" id="MF_00121">
    <property type="entry name" value="GatB"/>
    <property type="match status" value="1"/>
</dbReference>
<dbReference type="InterPro" id="IPR017959">
    <property type="entry name" value="Asn/Gln-tRNA_amidoTrfase_suB/E"/>
</dbReference>
<dbReference type="InterPro" id="IPR006075">
    <property type="entry name" value="Asn/Gln-tRNA_Trfase_suB/E_cat"/>
</dbReference>
<dbReference type="InterPro" id="IPR018027">
    <property type="entry name" value="Asn/Gln_amidotransferase"/>
</dbReference>
<dbReference type="InterPro" id="IPR003789">
    <property type="entry name" value="Asn/Gln_tRNA_amidoTrase-B-like"/>
</dbReference>
<dbReference type="InterPro" id="IPR004413">
    <property type="entry name" value="GatB"/>
</dbReference>
<dbReference type="InterPro" id="IPR042114">
    <property type="entry name" value="GatB_C_1"/>
</dbReference>
<dbReference type="InterPro" id="IPR023168">
    <property type="entry name" value="GatB_Yqey_C_2"/>
</dbReference>
<dbReference type="InterPro" id="IPR017958">
    <property type="entry name" value="Gln-tRNA_amidoTrfase_suB_CS"/>
</dbReference>
<dbReference type="InterPro" id="IPR014746">
    <property type="entry name" value="Gln_synth/guanido_kin_cat_dom"/>
</dbReference>
<dbReference type="NCBIfam" id="TIGR00133">
    <property type="entry name" value="gatB"/>
    <property type="match status" value="1"/>
</dbReference>
<dbReference type="NCBIfam" id="NF004012">
    <property type="entry name" value="PRK05477.1-2"/>
    <property type="match status" value="1"/>
</dbReference>
<dbReference type="NCBIfam" id="NF004014">
    <property type="entry name" value="PRK05477.1-4"/>
    <property type="match status" value="1"/>
</dbReference>
<dbReference type="PANTHER" id="PTHR11659">
    <property type="entry name" value="GLUTAMYL-TRNA GLN AMIDOTRANSFERASE SUBUNIT B MITOCHONDRIAL AND PROKARYOTIC PET112-RELATED"/>
    <property type="match status" value="1"/>
</dbReference>
<dbReference type="PANTHER" id="PTHR11659:SF0">
    <property type="entry name" value="GLUTAMYL-TRNA(GLN) AMIDOTRANSFERASE SUBUNIT B, MITOCHONDRIAL"/>
    <property type="match status" value="1"/>
</dbReference>
<dbReference type="Pfam" id="PF02934">
    <property type="entry name" value="GatB_N"/>
    <property type="match status" value="1"/>
</dbReference>
<dbReference type="Pfam" id="PF02637">
    <property type="entry name" value="GatB_Yqey"/>
    <property type="match status" value="1"/>
</dbReference>
<dbReference type="SMART" id="SM00845">
    <property type="entry name" value="GatB_Yqey"/>
    <property type="match status" value="1"/>
</dbReference>
<dbReference type="SUPFAM" id="SSF89095">
    <property type="entry name" value="GatB/YqeY motif"/>
    <property type="match status" value="2"/>
</dbReference>
<dbReference type="SUPFAM" id="SSF55931">
    <property type="entry name" value="Glutamine synthetase/guanido kinase"/>
    <property type="match status" value="1"/>
</dbReference>
<dbReference type="PROSITE" id="PS01234">
    <property type="entry name" value="GATB"/>
    <property type="match status" value="1"/>
</dbReference>
<gene>
    <name evidence="1" type="primary">gatB</name>
    <name type="ordered locus">Mbar_A0884</name>
</gene>
<feature type="chain" id="PRO_0000241301" description="Aspartyl/glutamyl-tRNA(Asn/Gln) amidotransferase subunit B">
    <location>
        <begin position="1"/>
        <end position="495"/>
    </location>
</feature>
<accession>Q46E34</accession>
<reference key="1">
    <citation type="journal article" date="2006" name="J. Bacteriol.">
        <title>The Methanosarcina barkeri genome: comparative analysis with Methanosarcina acetivorans and Methanosarcina mazei reveals extensive rearrangement within methanosarcinal genomes.</title>
        <authorList>
            <person name="Maeder D.L."/>
            <person name="Anderson I."/>
            <person name="Brettin T.S."/>
            <person name="Bruce D.C."/>
            <person name="Gilna P."/>
            <person name="Han C.S."/>
            <person name="Lapidus A."/>
            <person name="Metcalf W.W."/>
            <person name="Saunders E."/>
            <person name="Tapia R."/>
            <person name="Sowers K.R."/>
        </authorList>
    </citation>
    <scope>NUCLEOTIDE SEQUENCE [LARGE SCALE GENOMIC DNA]</scope>
    <source>
        <strain>Fusaro / DSM 804</strain>
    </source>
</reference>
<protein>
    <recommendedName>
        <fullName evidence="1">Aspartyl/glutamyl-tRNA(Asn/Gln) amidotransferase subunit B</fullName>
        <shortName evidence="1">Asp/Glu-ADT subunit B</shortName>
        <ecNumber evidence="1">6.3.5.-</ecNumber>
    </recommendedName>
</protein>
<keyword id="KW-0067">ATP-binding</keyword>
<keyword id="KW-0436">Ligase</keyword>
<keyword id="KW-0547">Nucleotide-binding</keyword>
<keyword id="KW-0648">Protein biosynthesis</keyword>
<sequence length="495" mass="55369">MVYENPDGVRIGLEIHIQLNKLKTKMFCGCSTDYHNAAPNTHTCPICLGLPGTLPVLNKKAVEAAIKVGLALEGEIAEETQFHRKNYFYPDLPKGFQITQYDFPIVSNGKVVIEGEDGEHTVGITRAHMEEDPGKLVHIGSIEKSKGVLIDYNRSGVPLIETVTEPDMRSPKEARRFLDKFRNILEYLDVFDGNLEGAMRVDANVSVHWGTRVEVKNISSHKGVEKALLYEIMRQKNVIRRGGKVSQETRHFDEGRGVTLSMRTKEEAEDYRYFREPDLMPMRITGWIPSIKKTLPELPDAKRARFIEQYGITDMHAKSLTSKIMLADFYESVCAKGVDPKIAATWTADVFLGELNYRDLEISSYDGKKIGFIHAKDPGIKNSIKASDMVELINLFAEGKISDRAAVEVIRTMLDAAEEKTPSQIIEEKGLFKAEDDLVTKAIAETIAENEAAVQDYIGGTEKSLNFLVGQVMKKTKGTADAKTARELIIKELKG</sequence>
<proteinExistence type="inferred from homology"/>
<organism>
    <name type="scientific">Methanosarcina barkeri (strain Fusaro / DSM 804)</name>
    <dbReference type="NCBI Taxonomy" id="269797"/>
    <lineage>
        <taxon>Archaea</taxon>
        <taxon>Methanobacteriati</taxon>
        <taxon>Methanobacteriota</taxon>
        <taxon>Stenosarchaea group</taxon>
        <taxon>Methanomicrobia</taxon>
        <taxon>Methanosarcinales</taxon>
        <taxon>Methanosarcinaceae</taxon>
        <taxon>Methanosarcina</taxon>
    </lineage>
</organism>
<evidence type="ECO:0000255" key="1">
    <source>
        <dbReference type="HAMAP-Rule" id="MF_00121"/>
    </source>
</evidence>